<protein>
    <recommendedName>
        <fullName evidence="1">Probable malate:quinone oxidoreductase</fullName>
        <ecNumber evidence="1">1.1.5.4</ecNumber>
    </recommendedName>
    <alternativeName>
        <fullName evidence="1">MQO</fullName>
    </alternativeName>
    <alternativeName>
        <fullName evidence="1">Malate dehydrogenase [quinone]</fullName>
    </alternativeName>
</protein>
<feature type="chain" id="PRO_1000099883" description="Probable malate:quinone oxidoreductase">
    <location>
        <begin position="1"/>
        <end position="562"/>
    </location>
</feature>
<feature type="region of interest" description="Disordered" evidence="2">
    <location>
        <begin position="535"/>
        <end position="562"/>
    </location>
</feature>
<feature type="compositionally biased region" description="Polar residues" evidence="2">
    <location>
        <begin position="545"/>
        <end position="562"/>
    </location>
</feature>
<comment type="catalytic activity">
    <reaction evidence="1">
        <text>(S)-malate + a quinone = a quinol + oxaloacetate</text>
        <dbReference type="Rhea" id="RHEA:46012"/>
        <dbReference type="ChEBI" id="CHEBI:15589"/>
        <dbReference type="ChEBI" id="CHEBI:16452"/>
        <dbReference type="ChEBI" id="CHEBI:24646"/>
        <dbReference type="ChEBI" id="CHEBI:132124"/>
        <dbReference type="EC" id="1.1.5.4"/>
    </reaction>
</comment>
<comment type="cofactor">
    <cofactor evidence="1">
        <name>FAD</name>
        <dbReference type="ChEBI" id="CHEBI:57692"/>
    </cofactor>
</comment>
<comment type="pathway">
    <text evidence="1">Carbohydrate metabolism; tricarboxylic acid cycle; oxaloacetate from (S)-malate (quinone route): step 1/1.</text>
</comment>
<comment type="similarity">
    <text evidence="1">Belongs to the MQO family.</text>
</comment>
<keyword id="KW-0274">FAD</keyword>
<keyword id="KW-0285">Flavoprotein</keyword>
<keyword id="KW-0560">Oxidoreductase</keyword>
<keyword id="KW-0816">Tricarboxylic acid cycle</keyword>
<name>MQO_XYLF2</name>
<gene>
    <name evidence="1" type="primary">mqo</name>
    <name type="ordered locus">XfasM23_1853</name>
</gene>
<organism>
    <name type="scientific">Xylella fastidiosa (strain M23)</name>
    <dbReference type="NCBI Taxonomy" id="405441"/>
    <lineage>
        <taxon>Bacteria</taxon>
        <taxon>Pseudomonadati</taxon>
        <taxon>Pseudomonadota</taxon>
        <taxon>Gammaproteobacteria</taxon>
        <taxon>Lysobacterales</taxon>
        <taxon>Lysobacteraceae</taxon>
        <taxon>Xylella</taxon>
    </lineage>
</organism>
<evidence type="ECO:0000255" key="1">
    <source>
        <dbReference type="HAMAP-Rule" id="MF_00212"/>
    </source>
</evidence>
<evidence type="ECO:0000256" key="2">
    <source>
        <dbReference type="SAM" id="MobiDB-lite"/>
    </source>
</evidence>
<reference key="1">
    <citation type="journal article" date="2010" name="J. Bacteriol.">
        <title>Whole genome sequences of two Xylella fastidiosa strains (M12 and M23) causing almond leaf scorch disease in California.</title>
        <authorList>
            <person name="Chen J."/>
            <person name="Xie G."/>
            <person name="Han S."/>
            <person name="Chertkov O."/>
            <person name="Sims D."/>
            <person name="Civerolo E.L."/>
        </authorList>
    </citation>
    <scope>NUCLEOTIDE SEQUENCE [LARGE SCALE GENOMIC DNA]</scope>
    <source>
        <strain>M23</strain>
    </source>
</reference>
<sequence>MKKSLKELTGLIVAFALATLLFLYWPLYQRSVPKANNDAPVDVVLIGGGIMSVTLGTYLQELQPDWKIELFERLNGIAQESSDGWNNAGTGHSAFAELNYTPELQDGTIEIKRAIKIAEQFEISREFWSHQVRHGRLPAPTEFINATPHMSFVWGEDRIEYLRKRHNALIKNPLFYGMQFSTDPAIIQKWAPLLMEGRTQDQKVAATYMPLGTDVNFGVITRDLAKHLQDSQNFALHLDHEVTALRQNPDKTWNVTVKDLNNGQERSIKSRFVFIGAGGAALKLLQLSGIPESKDYAGFPVGGQFLSFENTAITKRHNVKAYGMAESGSPPMSVPHLDARKLDGKSIVLFGPFALYSTKFLKNGSWFDLYSSVNHHNAAGMLSVGKNNIDLVKYLMKQATLTDADRHAELLKYFPNAKPTDWTLVTAGQRVQIIKRDPDKGMILQFGTEIVMDKDHTLATLLGASPGASTSPSIMLDLLAKAFPQQMKNGWETQLKKIIPSYGQHINDSPALTNKIRRMTSETLSLPYLEVPDKSATPADPTIAPKNQHSTTYNANSEMQAL</sequence>
<dbReference type="EC" id="1.1.5.4" evidence="1"/>
<dbReference type="EMBL" id="CP001011">
    <property type="protein sequence ID" value="ACB93253.1"/>
    <property type="molecule type" value="Genomic_DNA"/>
</dbReference>
<dbReference type="RefSeq" id="WP_004089665.1">
    <property type="nucleotide sequence ID" value="NC_010577.1"/>
</dbReference>
<dbReference type="SMR" id="B2I8R2"/>
<dbReference type="GeneID" id="93905598"/>
<dbReference type="KEGG" id="xfn:XfasM23_1853"/>
<dbReference type="HOGENOM" id="CLU_028151_0_0_6"/>
<dbReference type="UniPathway" id="UPA00223">
    <property type="reaction ID" value="UER01008"/>
</dbReference>
<dbReference type="Proteomes" id="UP000001698">
    <property type="component" value="Chromosome"/>
</dbReference>
<dbReference type="GO" id="GO:0047545">
    <property type="term" value="F:2-hydroxyglutarate dehydrogenase activity"/>
    <property type="evidence" value="ECO:0007669"/>
    <property type="project" value="TreeGrafter"/>
</dbReference>
<dbReference type="GO" id="GO:0008924">
    <property type="term" value="F:L-malate dehydrogenase (quinone) activity"/>
    <property type="evidence" value="ECO:0007669"/>
    <property type="project" value="UniProtKB-UniRule"/>
</dbReference>
<dbReference type="GO" id="GO:0006099">
    <property type="term" value="P:tricarboxylic acid cycle"/>
    <property type="evidence" value="ECO:0007669"/>
    <property type="project" value="UniProtKB-UniRule"/>
</dbReference>
<dbReference type="Gene3D" id="3.30.9.10">
    <property type="entry name" value="D-Amino Acid Oxidase, subunit A, domain 2"/>
    <property type="match status" value="1"/>
</dbReference>
<dbReference type="Gene3D" id="3.50.50.60">
    <property type="entry name" value="FAD/NAD(P)-binding domain"/>
    <property type="match status" value="1"/>
</dbReference>
<dbReference type="HAMAP" id="MF_00212">
    <property type="entry name" value="MQO"/>
    <property type="match status" value="1"/>
</dbReference>
<dbReference type="InterPro" id="IPR036188">
    <property type="entry name" value="FAD/NAD-bd_sf"/>
</dbReference>
<dbReference type="InterPro" id="IPR006231">
    <property type="entry name" value="MQO"/>
</dbReference>
<dbReference type="NCBIfam" id="TIGR01320">
    <property type="entry name" value="mal_quin_oxido"/>
    <property type="match status" value="1"/>
</dbReference>
<dbReference type="NCBIfam" id="NF003603">
    <property type="entry name" value="PRK05257.1-1"/>
    <property type="match status" value="1"/>
</dbReference>
<dbReference type="NCBIfam" id="NF003605">
    <property type="entry name" value="PRK05257.1-4"/>
    <property type="match status" value="1"/>
</dbReference>
<dbReference type="NCBIfam" id="NF003606">
    <property type="entry name" value="PRK05257.2-1"/>
    <property type="match status" value="1"/>
</dbReference>
<dbReference type="NCBIfam" id="NF003611">
    <property type="entry name" value="PRK05257.3-2"/>
    <property type="match status" value="1"/>
</dbReference>
<dbReference type="NCBIfam" id="NF009875">
    <property type="entry name" value="PRK13339.1"/>
    <property type="match status" value="1"/>
</dbReference>
<dbReference type="PANTHER" id="PTHR43104">
    <property type="entry name" value="L-2-HYDROXYGLUTARATE DEHYDROGENASE, MITOCHONDRIAL"/>
    <property type="match status" value="1"/>
</dbReference>
<dbReference type="PANTHER" id="PTHR43104:SF2">
    <property type="entry name" value="L-2-HYDROXYGLUTARATE DEHYDROGENASE, MITOCHONDRIAL"/>
    <property type="match status" value="1"/>
</dbReference>
<dbReference type="Pfam" id="PF06039">
    <property type="entry name" value="Mqo"/>
    <property type="match status" value="1"/>
</dbReference>
<dbReference type="SUPFAM" id="SSF51905">
    <property type="entry name" value="FAD/NAD(P)-binding domain"/>
    <property type="match status" value="1"/>
</dbReference>
<accession>B2I8R2</accession>
<proteinExistence type="inferred from homology"/>